<proteinExistence type="inferred from homology"/>
<evidence type="ECO:0000255" key="1">
    <source>
        <dbReference type="HAMAP-Rule" id="MF_00361"/>
    </source>
</evidence>
<organism>
    <name type="scientific">Thermosipho melanesiensis (strain DSM 12029 / CIP 104789 / BI429)</name>
    <dbReference type="NCBI Taxonomy" id="391009"/>
    <lineage>
        <taxon>Bacteria</taxon>
        <taxon>Thermotogati</taxon>
        <taxon>Thermotogota</taxon>
        <taxon>Thermotogae</taxon>
        <taxon>Thermotogales</taxon>
        <taxon>Fervidobacteriaceae</taxon>
        <taxon>Thermosipho</taxon>
    </lineage>
</organism>
<comment type="function">
    <text evidence="1">Involved in the regulation of the intracellular balance of NAD and NADP, and is a key enzyme in the biosynthesis of NADP. Catalyzes specifically the phosphorylation on 2'-hydroxyl of the adenosine moiety of NAD to yield NADP.</text>
</comment>
<comment type="catalytic activity">
    <reaction evidence="1">
        <text>NAD(+) + ATP = ADP + NADP(+) + H(+)</text>
        <dbReference type="Rhea" id="RHEA:18629"/>
        <dbReference type="ChEBI" id="CHEBI:15378"/>
        <dbReference type="ChEBI" id="CHEBI:30616"/>
        <dbReference type="ChEBI" id="CHEBI:57540"/>
        <dbReference type="ChEBI" id="CHEBI:58349"/>
        <dbReference type="ChEBI" id="CHEBI:456216"/>
        <dbReference type="EC" id="2.7.1.23"/>
    </reaction>
</comment>
<comment type="cofactor">
    <cofactor evidence="1">
        <name>a divalent metal cation</name>
        <dbReference type="ChEBI" id="CHEBI:60240"/>
    </cofactor>
</comment>
<comment type="subcellular location">
    <subcellularLocation>
        <location evidence="1">Cytoplasm</location>
    </subcellularLocation>
</comment>
<comment type="similarity">
    <text evidence="1">Belongs to the NAD kinase family.</text>
</comment>
<protein>
    <recommendedName>
        <fullName evidence="1">NAD kinase</fullName>
        <ecNumber evidence="1">2.7.1.23</ecNumber>
    </recommendedName>
    <alternativeName>
        <fullName evidence="1">ATP-dependent NAD kinase</fullName>
    </alternativeName>
</protein>
<name>NADK_THEM4</name>
<sequence length="251" mass="28453">MKVLGIFHKPSLKSVAEKFSEILFDENFHVEYVGSEIPSIEVDLTLVLGGDGTFLKAAHKVRNPLVGFKGGRLGFLSSYTLGDFDKFLEDLKNENFERDIRYFLKAGDFYTLNEVLLIRDPVQKMVDIQIFFQDGDFYFHADGLIISTPTGSTGYSLSLGGPIMLPNVNSFVITPVAPQFLASRSIIVPDDEEIIVRIDQEINLILDGMDFGKVREVNLKKSRRRIVILRPKDYNFSKSIKEKLGYGKRFL</sequence>
<gene>
    <name evidence="1" type="primary">nadK</name>
    <name type="ordered locus">Tmel_1541</name>
</gene>
<keyword id="KW-0067">ATP-binding</keyword>
<keyword id="KW-0963">Cytoplasm</keyword>
<keyword id="KW-0418">Kinase</keyword>
<keyword id="KW-0520">NAD</keyword>
<keyword id="KW-0521">NADP</keyword>
<keyword id="KW-0547">Nucleotide-binding</keyword>
<keyword id="KW-0808">Transferase</keyword>
<feature type="chain" id="PRO_1000005452" description="NAD kinase">
    <location>
        <begin position="1"/>
        <end position="251"/>
    </location>
</feature>
<feature type="active site" description="Proton acceptor" evidence="1">
    <location>
        <position position="51"/>
    </location>
</feature>
<feature type="binding site" evidence="1">
    <location>
        <begin position="51"/>
        <end position="52"/>
    </location>
    <ligand>
        <name>NAD(+)</name>
        <dbReference type="ChEBI" id="CHEBI:57540"/>
    </ligand>
</feature>
<feature type="binding site" evidence="1">
    <location>
        <position position="56"/>
    </location>
    <ligand>
        <name>NAD(+)</name>
        <dbReference type="ChEBI" id="CHEBI:57540"/>
    </ligand>
</feature>
<feature type="binding site" evidence="1">
    <location>
        <begin position="113"/>
        <end position="114"/>
    </location>
    <ligand>
        <name>NAD(+)</name>
        <dbReference type="ChEBI" id="CHEBI:57540"/>
    </ligand>
</feature>
<feature type="binding site" evidence="1">
    <location>
        <position position="124"/>
    </location>
    <ligand>
        <name>NAD(+)</name>
        <dbReference type="ChEBI" id="CHEBI:57540"/>
    </ligand>
</feature>
<feature type="binding site" evidence="1">
    <location>
        <position position="140"/>
    </location>
    <ligand>
        <name>NAD(+)</name>
        <dbReference type="ChEBI" id="CHEBI:57540"/>
    </ligand>
</feature>
<feature type="binding site" evidence="1">
    <location>
        <position position="142"/>
    </location>
    <ligand>
        <name>NAD(+)</name>
        <dbReference type="ChEBI" id="CHEBI:57540"/>
    </ligand>
</feature>
<feature type="binding site" evidence="1">
    <location>
        <begin position="153"/>
        <end position="158"/>
    </location>
    <ligand>
        <name>NAD(+)</name>
        <dbReference type="ChEBI" id="CHEBI:57540"/>
    </ligand>
</feature>
<feature type="binding site" evidence="1">
    <location>
        <position position="177"/>
    </location>
    <ligand>
        <name>NAD(+)</name>
        <dbReference type="ChEBI" id="CHEBI:57540"/>
    </ligand>
</feature>
<reference key="1">
    <citation type="submission" date="2007-05" db="EMBL/GenBank/DDBJ databases">
        <title>Complete sequence of Thermosipho melanesiensis BI429.</title>
        <authorList>
            <consortium name="US DOE Joint Genome Institute"/>
            <person name="Copeland A."/>
            <person name="Lucas S."/>
            <person name="Lapidus A."/>
            <person name="Barry K."/>
            <person name="Glavina del Rio T."/>
            <person name="Dalin E."/>
            <person name="Tice H."/>
            <person name="Pitluck S."/>
            <person name="Chertkov O."/>
            <person name="Brettin T."/>
            <person name="Bruce D."/>
            <person name="Detter J.C."/>
            <person name="Han C."/>
            <person name="Schmutz J."/>
            <person name="Larimer F."/>
            <person name="Land M."/>
            <person name="Hauser L."/>
            <person name="Kyrpides N."/>
            <person name="Mikhailova N."/>
            <person name="Nelson K."/>
            <person name="Gogarten J.P."/>
            <person name="Noll K."/>
            <person name="Richardson P."/>
        </authorList>
    </citation>
    <scope>NUCLEOTIDE SEQUENCE [LARGE SCALE GENOMIC DNA]</scope>
    <source>
        <strain>DSM 12029 / CIP 104789 / BI429</strain>
    </source>
</reference>
<dbReference type="EC" id="2.7.1.23" evidence="1"/>
<dbReference type="EMBL" id="CP000716">
    <property type="protein sequence ID" value="ABR31386.1"/>
    <property type="molecule type" value="Genomic_DNA"/>
</dbReference>
<dbReference type="RefSeq" id="WP_012057745.1">
    <property type="nucleotide sequence ID" value="NC_009616.1"/>
</dbReference>
<dbReference type="SMR" id="A6LN85"/>
<dbReference type="STRING" id="391009.Tmel_1541"/>
<dbReference type="KEGG" id="tme:Tmel_1541"/>
<dbReference type="eggNOG" id="COG0061">
    <property type="taxonomic scope" value="Bacteria"/>
</dbReference>
<dbReference type="HOGENOM" id="CLU_008831_0_3_0"/>
<dbReference type="OrthoDB" id="9774737at2"/>
<dbReference type="Proteomes" id="UP000001110">
    <property type="component" value="Chromosome"/>
</dbReference>
<dbReference type="GO" id="GO:0005737">
    <property type="term" value="C:cytoplasm"/>
    <property type="evidence" value="ECO:0007669"/>
    <property type="project" value="UniProtKB-SubCell"/>
</dbReference>
<dbReference type="GO" id="GO:0005524">
    <property type="term" value="F:ATP binding"/>
    <property type="evidence" value="ECO:0007669"/>
    <property type="project" value="UniProtKB-KW"/>
</dbReference>
<dbReference type="GO" id="GO:0046872">
    <property type="term" value="F:metal ion binding"/>
    <property type="evidence" value="ECO:0007669"/>
    <property type="project" value="UniProtKB-UniRule"/>
</dbReference>
<dbReference type="GO" id="GO:0051287">
    <property type="term" value="F:NAD binding"/>
    <property type="evidence" value="ECO:0007669"/>
    <property type="project" value="UniProtKB-ARBA"/>
</dbReference>
<dbReference type="GO" id="GO:0003951">
    <property type="term" value="F:NAD+ kinase activity"/>
    <property type="evidence" value="ECO:0007669"/>
    <property type="project" value="UniProtKB-UniRule"/>
</dbReference>
<dbReference type="GO" id="GO:0019674">
    <property type="term" value="P:NAD metabolic process"/>
    <property type="evidence" value="ECO:0007669"/>
    <property type="project" value="InterPro"/>
</dbReference>
<dbReference type="GO" id="GO:0006741">
    <property type="term" value="P:NADP biosynthetic process"/>
    <property type="evidence" value="ECO:0007669"/>
    <property type="project" value="UniProtKB-UniRule"/>
</dbReference>
<dbReference type="Gene3D" id="3.40.50.10330">
    <property type="entry name" value="Probable inorganic polyphosphate/atp-NAD kinase, domain 1"/>
    <property type="match status" value="1"/>
</dbReference>
<dbReference type="Gene3D" id="2.60.200.30">
    <property type="entry name" value="Probable inorganic polyphosphate/atp-NAD kinase, domain 2"/>
    <property type="match status" value="1"/>
</dbReference>
<dbReference type="HAMAP" id="MF_00361">
    <property type="entry name" value="NAD_kinase"/>
    <property type="match status" value="1"/>
</dbReference>
<dbReference type="InterPro" id="IPR017438">
    <property type="entry name" value="ATP-NAD_kinase_N"/>
</dbReference>
<dbReference type="InterPro" id="IPR017437">
    <property type="entry name" value="ATP-NAD_kinase_PpnK-typ_C"/>
</dbReference>
<dbReference type="InterPro" id="IPR016064">
    <property type="entry name" value="NAD/diacylglycerol_kinase_sf"/>
</dbReference>
<dbReference type="InterPro" id="IPR002504">
    <property type="entry name" value="NADK"/>
</dbReference>
<dbReference type="NCBIfam" id="NF010677">
    <property type="entry name" value="PRK14075.1"/>
    <property type="match status" value="1"/>
</dbReference>
<dbReference type="PANTHER" id="PTHR20275">
    <property type="entry name" value="NAD KINASE"/>
    <property type="match status" value="1"/>
</dbReference>
<dbReference type="PANTHER" id="PTHR20275:SF0">
    <property type="entry name" value="NAD KINASE"/>
    <property type="match status" value="1"/>
</dbReference>
<dbReference type="Pfam" id="PF01513">
    <property type="entry name" value="NAD_kinase"/>
    <property type="match status" value="1"/>
</dbReference>
<dbReference type="Pfam" id="PF20143">
    <property type="entry name" value="NAD_kinase_C"/>
    <property type="match status" value="1"/>
</dbReference>
<dbReference type="SUPFAM" id="SSF111331">
    <property type="entry name" value="NAD kinase/diacylglycerol kinase-like"/>
    <property type="match status" value="1"/>
</dbReference>
<accession>A6LN85</accession>